<feature type="chain" id="PRO_0000059119" description="Probable polypeptide N-acetylgalactosaminyltransferase 8">
    <location>
        <begin position="1"/>
        <end position="637"/>
    </location>
</feature>
<feature type="topological domain" description="Cytoplasmic" evidence="6">
    <location>
        <begin position="1"/>
        <end position="6"/>
    </location>
</feature>
<feature type="transmembrane region" description="Helical; Signal-anchor for type II membrane protein" evidence="6">
    <location>
        <begin position="7"/>
        <end position="29"/>
    </location>
</feature>
<feature type="topological domain" description="Lumenal" evidence="6">
    <location>
        <begin position="30"/>
        <end position="637"/>
    </location>
</feature>
<feature type="domain" description="Ricin B-type lectin" evidence="7">
    <location>
        <begin position="496"/>
        <end position="634"/>
    </location>
</feature>
<feature type="region of interest" description="Catalytic subdomain A">
    <location>
        <begin position="180"/>
        <end position="294"/>
    </location>
</feature>
<feature type="region of interest" description="Catalytic subdomain B">
    <location>
        <begin position="351"/>
        <end position="412"/>
    </location>
</feature>
<feature type="binding site" evidence="1">
    <location>
        <position position="221"/>
    </location>
    <ligand>
        <name>substrate</name>
    </ligand>
</feature>
<feature type="binding site" evidence="1">
    <location>
        <position position="255"/>
    </location>
    <ligand>
        <name>substrate</name>
    </ligand>
</feature>
<feature type="binding site" evidence="1">
    <location>
        <position position="278"/>
    </location>
    <ligand>
        <name>Mn(2+)</name>
        <dbReference type="ChEBI" id="CHEBI:29035"/>
    </ligand>
</feature>
<feature type="binding site" evidence="1">
    <location>
        <position position="280"/>
    </location>
    <ligand>
        <name>Mn(2+)</name>
        <dbReference type="ChEBI" id="CHEBI:29035"/>
    </ligand>
</feature>
<feature type="binding site" evidence="1">
    <location>
        <position position="409"/>
    </location>
    <ligand>
        <name>Mn(2+)</name>
        <dbReference type="ChEBI" id="CHEBI:29035"/>
    </ligand>
</feature>
<feature type="binding site" evidence="1">
    <location>
        <position position="412"/>
    </location>
    <ligand>
        <name>substrate</name>
    </ligand>
</feature>
<feature type="binding site" evidence="1">
    <location>
        <position position="417"/>
    </location>
    <ligand>
        <name>substrate</name>
    </ligand>
</feature>
<feature type="glycosylation site" description="N-linked (GlcNAc...) asparagine" evidence="6">
    <location>
        <position position="85"/>
    </location>
</feature>
<feature type="glycosylation site" description="N-linked (GlcNAc...) asparagine" evidence="6">
    <location>
        <position position="107"/>
    </location>
</feature>
<feature type="glycosylation site" description="N-linked (GlcNAc...) asparagine" evidence="6">
    <location>
        <position position="160"/>
    </location>
</feature>
<feature type="disulfide bond" evidence="7">
    <location>
        <begin position="171"/>
        <end position="404"/>
    </location>
</feature>
<feature type="disulfide bond" evidence="7">
    <location>
        <begin position="395"/>
        <end position="474"/>
    </location>
</feature>
<feature type="disulfide bond" evidence="7">
    <location>
        <begin position="509"/>
        <end position="525"/>
    </location>
</feature>
<feature type="disulfide bond" evidence="7">
    <location>
        <begin position="556"/>
        <end position="571"/>
    </location>
</feature>
<feature type="disulfide bond" evidence="7">
    <location>
        <begin position="599"/>
        <end position="617"/>
    </location>
</feature>
<feature type="sequence variant" id="VAR_019581" description="In dbSNP:rs10849133.">
    <original>Y</original>
    <variation>D</variation>
    <location>
        <position position="53"/>
    </location>
</feature>
<feature type="sequence variant" id="VAR_019582" description="In dbSNP:rs10849133." evidence="8">
    <original>Y</original>
    <variation>N</variation>
    <location>
        <position position="53"/>
    </location>
</feature>
<feature type="sequence variant" id="VAR_033947" description="In dbSNP:rs16931676.">
    <original>E</original>
    <variation>K</variation>
    <location>
        <position position="234"/>
    </location>
</feature>
<feature type="sequence variant" id="VAR_019583" description="In dbSNP:rs34776842." evidence="8">
    <original>E</original>
    <variation>G</variation>
    <location>
        <position position="267"/>
    </location>
</feature>
<feature type="sequence variant" id="VAR_019584" description="In dbSNP:rs34829532." evidence="8">
    <original>F</original>
    <variation>S</variation>
    <location>
        <position position="312"/>
    </location>
</feature>
<feature type="sequence variant" id="VAR_019585" description="In dbSNP:rs199920896." evidence="8">
    <original>A</original>
    <variation>V</variation>
    <location>
        <position position="337"/>
    </location>
</feature>
<feature type="sequence variant" id="VAR_019586" description="In dbSNP:rs559663039." evidence="8">
    <original>D</original>
    <variation>G</variation>
    <location>
        <position position="438"/>
    </location>
</feature>
<feature type="sequence variant" id="VAR_019587" description="In dbSNP:rs1468556." evidence="8">
    <original>V</original>
    <variation>F</variation>
    <location>
        <position position="515"/>
    </location>
</feature>
<feature type="sequence variant" id="VAR_019588" description="In dbSNP:rs34114277." evidence="8">
    <original>V</original>
    <variation>M</variation>
    <location>
        <position position="611"/>
    </location>
</feature>
<feature type="sequence variant" id="VAR_049241" description="In dbSNP:rs16931692.">
    <original>D</original>
    <variation>G</variation>
    <location>
        <position position="630"/>
    </location>
</feature>
<comment type="function">
    <text evidence="5">Probably catalyzes the initial reaction in O-linked oligosaccharide biosynthesis, the transfer of an N-acetyl-D-galactosamine residue to a serine or threonine residue on the protein receptor.</text>
</comment>
<comment type="catalytic activity">
    <reaction evidence="5">
        <text>L-seryl-[protein] + UDP-N-acetyl-alpha-D-galactosamine = a 3-O-[N-acetyl-alpha-D-galactosaminyl]-L-seryl-[protein] + UDP + H(+)</text>
        <dbReference type="Rhea" id="RHEA:23956"/>
        <dbReference type="Rhea" id="RHEA-COMP:9863"/>
        <dbReference type="Rhea" id="RHEA-COMP:12788"/>
        <dbReference type="ChEBI" id="CHEBI:15378"/>
        <dbReference type="ChEBI" id="CHEBI:29999"/>
        <dbReference type="ChEBI" id="CHEBI:53604"/>
        <dbReference type="ChEBI" id="CHEBI:58223"/>
        <dbReference type="ChEBI" id="CHEBI:67138"/>
        <dbReference type="EC" id="2.4.1.41"/>
    </reaction>
</comment>
<comment type="catalytic activity">
    <reaction evidence="5">
        <text>L-threonyl-[protein] + UDP-N-acetyl-alpha-D-galactosamine = a 3-O-[N-acetyl-alpha-D-galactosaminyl]-L-threonyl-[protein] + UDP + H(+)</text>
        <dbReference type="Rhea" id="RHEA:52424"/>
        <dbReference type="Rhea" id="RHEA-COMP:11060"/>
        <dbReference type="Rhea" id="RHEA-COMP:11689"/>
        <dbReference type="ChEBI" id="CHEBI:15378"/>
        <dbReference type="ChEBI" id="CHEBI:30013"/>
        <dbReference type="ChEBI" id="CHEBI:58223"/>
        <dbReference type="ChEBI" id="CHEBI:67138"/>
        <dbReference type="ChEBI" id="CHEBI:87075"/>
        <dbReference type="EC" id="2.4.1.41"/>
    </reaction>
</comment>
<comment type="cofactor">
    <cofactor evidence="3">
        <name>Mn(2+)</name>
        <dbReference type="ChEBI" id="CHEBI:29035"/>
    </cofactor>
</comment>
<comment type="pathway">
    <text evidence="5">Protein modification; protein glycosylation.</text>
</comment>
<comment type="subcellular location">
    <subcellularLocation>
        <location evidence="5">Golgi apparatus membrane</location>
        <topology evidence="6">Single-pass type II membrane protein</topology>
    </subcellularLocation>
</comment>
<comment type="tissue specificity">
    <text evidence="8">Widely expressed. Expressed in heart, skeletal muscle, kidney, liver, small intestine and placenta. Weakly expressed in colon, thymus, spleen, lung and leukocyte.</text>
</comment>
<comment type="domain">
    <text evidence="2">There are two conserved domains in the glycosyltransferase region: the N-terminal domain (domain A, also called GT1 motif), which is probably involved in manganese coordination and substrate binding and the C-terminal domain (domain B, also called Gal/GalNAc-T motif), which is probably involved in catalytic reaction and UDP-Gal binding.</text>
</comment>
<comment type="domain">
    <text evidence="4">The ricin B-type lectin domain binds to GalNAc and contributes to the glycopeptide specificity.</text>
</comment>
<comment type="similarity">
    <text evidence="9">Belongs to the glycosyltransferase 2 family. GalNAc-T subfamily.</text>
</comment>
<comment type="online information" name="Functional Glycomics Gateway - GTase">
    <link uri="http://www.functionalglycomics.org/glycomics/molecule/jsp/glycoEnzyme/viewGlycoEnzyme.jsp?gbpId=gt_hum_490"/>
    <text>Probable polypeptide N-acetylgalactosaminyltransferase 8</text>
</comment>
<gene>
    <name type="primary">GALNT8</name>
</gene>
<reference key="1">
    <citation type="journal article" date="2000" name="Gene">
        <title>Molecular cloning of a novel human UDP-GalNAc:polypeptide N-acetylgalactosaminyltransferase, GalNAc-T8, and analysis as a candidate autosomal dominant hypophosphatemic rickets (ADHR) gene.</title>
        <authorList>
            <person name="White K.E."/>
            <person name="Lorenz B."/>
            <person name="Evans W.E."/>
            <person name="Meitinger T."/>
            <person name="Strom T.M."/>
            <person name="Econs M.J."/>
        </authorList>
    </citation>
    <scope>NUCLEOTIDE SEQUENCE [MRNA]</scope>
    <scope>TISSUE SPECIFICITY</scope>
    <scope>VARIANTS ASN-53; GLY-267; SER-312; VAL-337; GLY-438; PHE-515 AND MET-611</scope>
    <source>
        <tissue>Fetal brain</tissue>
    </source>
</reference>
<reference key="2">
    <citation type="journal article" date="2004" name="Genome Res.">
        <title>The status, quality, and expansion of the NIH full-length cDNA project: the Mammalian Gene Collection (MGC).</title>
        <authorList>
            <consortium name="The MGC Project Team"/>
        </authorList>
    </citation>
    <scope>NUCLEOTIDE SEQUENCE [LARGE SCALE MRNA]</scope>
</reference>
<proteinExistence type="evidence at protein level"/>
<organism>
    <name type="scientific">Homo sapiens</name>
    <name type="common">Human</name>
    <dbReference type="NCBI Taxonomy" id="9606"/>
    <lineage>
        <taxon>Eukaryota</taxon>
        <taxon>Metazoa</taxon>
        <taxon>Chordata</taxon>
        <taxon>Craniata</taxon>
        <taxon>Vertebrata</taxon>
        <taxon>Euteleostomi</taxon>
        <taxon>Mammalia</taxon>
        <taxon>Eutheria</taxon>
        <taxon>Euarchontoglires</taxon>
        <taxon>Primates</taxon>
        <taxon>Haplorrhini</taxon>
        <taxon>Catarrhini</taxon>
        <taxon>Hominidae</taxon>
        <taxon>Homo</taxon>
    </lineage>
</organism>
<dbReference type="EC" id="2.4.1.41" evidence="5"/>
<dbReference type="EMBL" id="AJ271385">
    <property type="protein sequence ID" value="CAB89199.1"/>
    <property type="molecule type" value="mRNA"/>
</dbReference>
<dbReference type="EMBL" id="BC140888">
    <property type="protein sequence ID" value="AAI40889.1"/>
    <property type="molecule type" value="mRNA"/>
</dbReference>
<dbReference type="EMBL" id="BC140889">
    <property type="protein sequence ID" value="AAI40890.1"/>
    <property type="molecule type" value="mRNA"/>
</dbReference>
<dbReference type="CCDS" id="CCDS8533.1"/>
<dbReference type="RefSeq" id="NP_059113.1">
    <property type="nucleotide sequence ID" value="NM_017417.2"/>
</dbReference>
<dbReference type="SMR" id="Q9NY28"/>
<dbReference type="BioGRID" id="117671">
    <property type="interactions" value="8"/>
</dbReference>
<dbReference type="FunCoup" id="Q9NY28">
    <property type="interactions" value="197"/>
</dbReference>
<dbReference type="IntAct" id="Q9NY28">
    <property type="interactions" value="7"/>
</dbReference>
<dbReference type="STRING" id="9606.ENSP00000252318"/>
<dbReference type="CAZy" id="CBM13">
    <property type="family name" value="Carbohydrate-Binding Module Family 13"/>
</dbReference>
<dbReference type="CAZy" id="GT27">
    <property type="family name" value="Glycosyltransferase Family 27"/>
</dbReference>
<dbReference type="GlyCosmos" id="Q9NY28">
    <property type="glycosylation" value="3 sites, No reported glycans"/>
</dbReference>
<dbReference type="GlyGen" id="Q9NY28">
    <property type="glycosylation" value="3 sites"/>
</dbReference>
<dbReference type="iPTMnet" id="Q9NY28"/>
<dbReference type="PhosphoSitePlus" id="Q9NY28"/>
<dbReference type="BioMuta" id="GALNT8"/>
<dbReference type="DMDM" id="51316106"/>
<dbReference type="MassIVE" id="Q9NY28"/>
<dbReference type="PaxDb" id="9606-ENSP00000252318"/>
<dbReference type="PeptideAtlas" id="Q9NY28"/>
<dbReference type="ProteomicsDB" id="83157"/>
<dbReference type="Antibodypedia" id="2423">
    <property type="antibodies" value="56 antibodies from 11 providers"/>
</dbReference>
<dbReference type="DNASU" id="26290"/>
<dbReference type="Ensembl" id="ENST00000252318.7">
    <property type="protein sequence ID" value="ENSP00000252318.2"/>
    <property type="gene ID" value="ENSG00000130035.9"/>
</dbReference>
<dbReference type="GeneID" id="26290"/>
<dbReference type="KEGG" id="hsa:26290"/>
<dbReference type="MANE-Select" id="ENST00000252318.7">
    <property type="protein sequence ID" value="ENSP00000252318.2"/>
    <property type="RefSeq nucleotide sequence ID" value="NM_017417.2"/>
    <property type="RefSeq protein sequence ID" value="NP_059113.1"/>
</dbReference>
<dbReference type="UCSC" id="uc001qne.2">
    <property type="organism name" value="human"/>
</dbReference>
<dbReference type="AGR" id="HGNC:4130"/>
<dbReference type="CTD" id="26290"/>
<dbReference type="DisGeNET" id="26290"/>
<dbReference type="GeneCards" id="GALNT8"/>
<dbReference type="HGNC" id="HGNC:4130">
    <property type="gene designation" value="GALNT8"/>
</dbReference>
<dbReference type="HPA" id="ENSG00000130035">
    <property type="expression patterns" value="Group enriched (intestine, testis)"/>
</dbReference>
<dbReference type="MIM" id="606250">
    <property type="type" value="gene"/>
</dbReference>
<dbReference type="neXtProt" id="NX_Q9NY28"/>
<dbReference type="OpenTargets" id="ENSG00000130035"/>
<dbReference type="PharmGKB" id="PA28543"/>
<dbReference type="VEuPathDB" id="HostDB:ENSG00000130035"/>
<dbReference type="eggNOG" id="KOG3736">
    <property type="taxonomic scope" value="Eukaryota"/>
</dbReference>
<dbReference type="GeneTree" id="ENSGT00940000160161"/>
<dbReference type="HOGENOM" id="CLU_013477_4_1_1"/>
<dbReference type="InParanoid" id="Q9NY28"/>
<dbReference type="OMA" id="MTFWRKR"/>
<dbReference type="OrthoDB" id="275457at2759"/>
<dbReference type="PAN-GO" id="Q9NY28">
    <property type="GO annotations" value="3 GO annotations based on evolutionary models"/>
</dbReference>
<dbReference type="PhylomeDB" id="Q9NY28"/>
<dbReference type="TreeFam" id="TF352661"/>
<dbReference type="PathwayCommons" id="Q9NY28"/>
<dbReference type="Reactome" id="R-HSA-913709">
    <property type="pathway name" value="O-linked glycosylation of mucins"/>
</dbReference>
<dbReference type="SignaLink" id="Q9NY28"/>
<dbReference type="SIGNOR" id="Q9NY28"/>
<dbReference type="UniPathway" id="UPA00378"/>
<dbReference type="BioGRID-ORCS" id="26290">
    <property type="hits" value="10 hits in 1144 CRISPR screens"/>
</dbReference>
<dbReference type="ChiTaRS" id="GALNT8">
    <property type="organism name" value="human"/>
</dbReference>
<dbReference type="GenomeRNAi" id="26290"/>
<dbReference type="Pharos" id="Q9NY28">
    <property type="development level" value="Tbio"/>
</dbReference>
<dbReference type="PRO" id="PR:Q9NY28"/>
<dbReference type="Proteomes" id="UP000005640">
    <property type="component" value="Chromosome 12"/>
</dbReference>
<dbReference type="RNAct" id="Q9NY28">
    <property type="molecule type" value="protein"/>
</dbReference>
<dbReference type="Bgee" id="ENSG00000130035">
    <property type="expression patterns" value="Expressed in cortical plate and 158 other cell types or tissues"/>
</dbReference>
<dbReference type="ExpressionAtlas" id="Q9NY28">
    <property type="expression patterns" value="baseline and differential"/>
</dbReference>
<dbReference type="GO" id="GO:0005794">
    <property type="term" value="C:Golgi apparatus"/>
    <property type="evidence" value="ECO:0000318"/>
    <property type="project" value="GO_Central"/>
</dbReference>
<dbReference type="GO" id="GO:0000139">
    <property type="term" value="C:Golgi membrane"/>
    <property type="evidence" value="ECO:0000304"/>
    <property type="project" value="Reactome"/>
</dbReference>
<dbReference type="GO" id="GO:0030246">
    <property type="term" value="F:carbohydrate binding"/>
    <property type="evidence" value="ECO:0007669"/>
    <property type="project" value="UniProtKB-KW"/>
</dbReference>
<dbReference type="GO" id="GO:0046872">
    <property type="term" value="F:metal ion binding"/>
    <property type="evidence" value="ECO:0007669"/>
    <property type="project" value="UniProtKB-KW"/>
</dbReference>
<dbReference type="GO" id="GO:0004653">
    <property type="term" value="F:polypeptide N-acetylgalactosaminyltransferase activity"/>
    <property type="evidence" value="ECO:0000318"/>
    <property type="project" value="GO_Central"/>
</dbReference>
<dbReference type="GO" id="GO:0016266">
    <property type="term" value="P:O-glycan processing"/>
    <property type="evidence" value="ECO:0000304"/>
    <property type="project" value="Reactome"/>
</dbReference>
<dbReference type="GO" id="GO:0006493">
    <property type="term" value="P:protein O-linked glycosylation"/>
    <property type="evidence" value="ECO:0000318"/>
    <property type="project" value="GO_Central"/>
</dbReference>
<dbReference type="CDD" id="cd23472">
    <property type="entry name" value="beta-trefoil_Ricin_GALNT8"/>
    <property type="match status" value="1"/>
</dbReference>
<dbReference type="CDD" id="cd02510">
    <property type="entry name" value="pp-GalNAc-T"/>
    <property type="match status" value="1"/>
</dbReference>
<dbReference type="FunFam" id="2.80.10.50:FF:000017">
    <property type="entry name" value="Polypeptide N-acetylgalactosaminyltransferase"/>
    <property type="match status" value="1"/>
</dbReference>
<dbReference type="FunFam" id="3.90.550.10:FF:000012">
    <property type="entry name" value="Polypeptide N-acetylgalactosaminyltransferase"/>
    <property type="match status" value="1"/>
</dbReference>
<dbReference type="Gene3D" id="2.80.10.50">
    <property type="match status" value="1"/>
</dbReference>
<dbReference type="Gene3D" id="3.90.550.10">
    <property type="entry name" value="Spore Coat Polysaccharide Biosynthesis Protein SpsA, Chain A"/>
    <property type="match status" value="1"/>
</dbReference>
<dbReference type="InterPro" id="IPR045885">
    <property type="entry name" value="GalNAc-T"/>
</dbReference>
<dbReference type="InterPro" id="IPR001173">
    <property type="entry name" value="Glyco_trans_2-like"/>
</dbReference>
<dbReference type="InterPro" id="IPR029044">
    <property type="entry name" value="Nucleotide-diphossugar_trans"/>
</dbReference>
<dbReference type="InterPro" id="IPR035992">
    <property type="entry name" value="Ricin_B-like_lectins"/>
</dbReference>
<dbReference type="InterPro" id="IPR000772">
    <property type="entry name" value="Ricin_B_lectin"/>
</dbReference>
<dbReference type="PANTHER" id="PTHR11675">
    <property type="entry name" value="N-ACETYLGALACTOSAMINYLTRANSFERASE"/>
    <property type="match status" value="1"/>
</dbReference>
<dbReference type="PANTHER" id="PTHR11675:SF50">
    <property type="entry name" value="POLYPEPTIDE N-ACETYLGALACTOSAMINYLTRANSFERASE 8-RELATED"/>
    <property type="match status" value="1"/>
</dbReference>
<dbReference type="Pfam" id="PF00535">
    <property type="entry name" value="Glycos_transf_2"/>
    <property type="match status" value="1"/>
</dbReference>
<dbReference type="Pfam" id="PF00652">
    <property type="entry name" value="Ricin_B_lectin"/>
    <property type="match status" value="1"/>
</dbReference>
<dbReference type="SMART" id="SM00458">
    <property type="entry name" value="RICIN"/>
    <property type="match status" value="1"/>
</dbReference>
<dbReference type="SUPFAM" id="SSF53448">
    <property type="entry name" value="Nucleotide-diphospho-sugar transferases"/>
    <property type="match status" value="1"/>
</dbReference>
<dbReference type="SUPFAM" id="SSF50370">
    <property type="entry name" value="Ricin B-like lectins"/>
    <property type="match status" value="1"/>
</dbReference>
<dbReference type="PROSITE" id="PS50231">
    <property type="entry name" value="RICIN_B_LECTIN"/>
    <property type="match status" value="1"/>
</dbReference>
<evidence type="ECO:0000250" key="1"/>
<evidence type="ECO:0000250" key="2">
    <source>
        <dbReference type="UniProtKB" id="O08912"/>
    </source>
</evidence>
<evidence type="ECO:0000250" key="3">
    <source>
        <dbReference type="UniProtKB" id="Q10471"/>
    </source>
</evidence>
<evidence type="ECO:0000250" key="4">
    <source>
        <dbReference type="UniProtKB" id="Q8N4A0"/>
    </source>
</evidence>
<evidence type="ECO:0000250" key="5">
    <source>
        <dbReference type="UniProtKB" id="Q9HCQ5"/>
    </source>
</evidence>
<evidence type="ECO:0000255" key="6"/>
<evidence type="ECO:0000255" key="7">
    <source>
        <dbReference type="PROSITE-ProRule" id="PRU00174"/>
    </source>
</evidence>
<evidence type="ECO:0000269" key="8">
    <source>
    </source>
</evidence>
<evidence type="ECO:0000305" key="9"/>
<accession>Q9NY28</accession>
<accession>B2RU02</accession>
<protein>
    <recommendedName>
        <fullName evidence="9">Probable polypeptide N-acetylgalactosaminyltransferase 8</fullName>
        <ecNumber evidence="5">2.4.1.41</ecNumber>
    </recommendedName>
    <alternativeName>
        <fullName>Polypeptide GalNAc transferase 8</fullName>
        <shortName>GalNAc-T8</shortName>
        <shortName>pp-GaNTase 8</shortName>
    </alternativeName>
    <alternativeName>
        <fullName>Protein-UDP acetylgalactosaminyltransferase 8</fullName>
    </alternativeName>
    <alternativeName>
        <fullName>UDP-GalNAc:polypeptide N-acetylgalactosaminyltransferase 8</fullName>
    </alternativeName>
</protein>
<sequence>MMFWRKLPKALFIGLTLAIAVNLLLVFSSKGTLQNLFTGGLHRELPLHLNKRYGAVIKRLSHLEVELQDLKESMKLALRQQENVNSTLKRAKDEVRPLLKAMETKVNETKKHKTQMKLFPHSQLFRQWGEDLSEAQQKAAQDLFRKFGYNAYLSNQLPLNRTIPDTRDYRCLRKTYPSQLPSLSVILIFVNEALSIIQRAITSIINRTPSRLLKEIILVDDFSSNGELKVHLDEKIKLYNQKYPGLLKIIRHPERKGLAQARNTGWEAATADVVAILDAHIEVNVGWAEPILARIQEDRTVIVSPVFDNIRFDTFKLDKYELAVDGFNWELWCRYDALPQAWIDLHDVTAPVKSPSIMGILAANRHFLGEIGSLDGGMLIYGGENVELSLRVWQCGGKVEILPCSRIAHLERHHKPYALDLTAALKRNALRVAEIWMDEHKHMVYLAWNIPLQNSGIDFGDVSSRMALREKLKCKTFDWYLKNVYPLLKPLHTIVGYGRMKNLLDENVCLDQGPVPGNTPIMYYCHEFSSQNVYYHLTGELYVGQLIAEASASDRCLTDPGKAEKPTLEPCSKAAKNRLHIYWDFKPGGAVINRDTKRCLEMKKDLLGSHVLVLQTCSTQVWEIQHTVRDWGQTNSQ</sequence>
<keyword id="KW-1015">Disulfide bond</keyword>
<keyword id="KW-0325">Glycoprotein</keyword>
<keyword id="KW-0328">Glycosyltransferase</keyword>
<keyword id="KW-0333">Golgi apparatus</keyword>
<keyword id="KW-0430">Lectin</keyword>
<keyword id="KW-0464">Manganese</keyword>
<keyword id="KW-0472">Membrane</keyword>
<keyword id="KW-0479">Metal-binding</keyword>
<keyword id="KW-1267">Proteomics identification</keyword>
<keyword id="KW-1185">Reference proteome</keyword>
<keyword id="KW-0735">Signal-anchor</keyword>
<keyword id="KW-0808">Transferase</keyword>
<keyword id="KW-0812">Transmembrane</keyword>
<keyword id="KW-1133">Transmembrane helix</keyword>
<name>GALT8_HUMAN</name>